<name>DLDH2_PSEAE</name>
<keyword id="KW-0002">3D-structure</keyword>
<keyword id="KW-0963">Cytoplasm</keyword>
<keyword id="KW-1015">Disulfide bond</keyword>
<keyword id="KW-0274">FAD</keyword>
<keyword id="KW-0285">Flavoprotein</keyword>
<keyword id="KW-0520">NAD</keyword>
<keyword id="KW-0560">Oxidoreductase</keyword>
<keyword id="KW-0676">Redox-active center</keyword>
<keyword id="KW-1185">Reference proteome</keyword>
<organism>
    <name type="scientific">Pseudomonas aeruginosa (strain ATCC 15692 / DSM 22644 / CIP 104116 / JCM 14847 / LMG 12228 / 1C / PRS 101 / PAO1)</name>
    <dbReference type="NCBI Taxonomy" id="208964"/>
    <lineage>
        <taxon>Bacteria</taxon>
        <taxon>Pseudomonadati</taxon>
        <taxon>Pseudomonadota</taxon>
        <taxon>Gammaproteobacteria</taxon>
        <taxon>Pseudomonadales</taxon>
        <taxon>Pseudomonadaceae</taxon>
        <taxon>Pseudomonas</taxon>
    </lineage>
</organism>
<proteinExistence type="evidence at protein level"/>
<reference key="1">
    <citation type="journal article" date="2000" name="Nature">
        <title>Complete genome sequence of Pseudomonas aeruginosa PAO1, an opportunistic pathogen.</title>
        <authorList>
            <person name="Stover C.K."/>
            <person name="Pham X.-Q.T."/>
            <person name="Erwin A.L."/>
            <person name="Mizoguchi S.D."/>
            <person name="Warrener P."/>
            <person name="Hickey M.J."/>
            <person name="Brinkman F.S.L."/>
            <person name="Hufnagle W.O."/>
            <person name="Kowalik D.J."/>
            <person name="Lagrou M."/>
            <person name="Garber R.L."/>
            <person name="Goltry L."/>
            <person name="Tolentino E."/>
            <person name="Westbrock-Wadman S."/>
            <person name="Yuan Y."/>
            <person name="Brody L.L."/>
            <person name="Coulter S.N."/>
            <person name="Folger K.R."/>
            <person name="Kas A."/>
            <person name="Larbig K."/>
            <person name="Lim R.M."/>
            <person name="Smith K.A."/>
            <person name="Spencer D.H."/>
            <person name="Wong G.K.-S."/>
            <person name="Wu Z."/>
            <person name="Paulsen I.T."/>
            <person name="Reizer J."/>
            <person name="Saier M.H. Jr."/>
            <person name="Hancock R.E.W."/>
            <person name="Lory S."/>
            <person name="Olson M.V."/>
        </authorList>
    </citation>
    <scope>NUCLEOTIDE SEQUENCE [LARGE SCALE GENOMIC DNA]</scope>
    <source>
        <strain>ATCC 15692 / DSM 22644 / CIP 104116 / JCM 14847 / LMG 12228 / 1C / PRS 101 / PAO1</strain>
    </source>
</reference>
<feature type="chain" id="PRO_0000287805" description="Dihydrolipoyl dehydrogenase">
    <location>
        <begin position="1"/>
        <end position="478"/>
    </location>
</feature>
<feature type="active site" description="Proton acceptor" evidence="1">
    <location>
        <position position="451"/>
    </location>
</feature>
<feature type="binding site" evidence="1">
    <location>
        <begin position="34"/>
        <end position="49"/>
    </location>
    <ligand>
        <name>FAD</name>
        <dbReference type="ChEBI" id="CHEBI:57692"/>
    </ligand>
</feature>
<feature type="binding site" evidence="1">
    <location>
        <position position="58"/>
    </location>
    <ligand>
        <name>FAD</name>
        <dbReference type="ChEBI" id="CHEBI:57692"/>
    </ligand>
</feature>
<feature type="binding site" evidence="1">
    <location>
        <position position="122"/>
    </location>
    <ligand>
        <name>FAD</name>
        <dbReference type="ChEBI" id="CHEBI:57692"/>
    </ligand>
</feature>
<feature type="binding site" evidence="1">
    <location>
        <begin position="188"/>
        <end position="192"/>
    </location>
    <ligand>
        <name>NAD(+)</name>
        <dbReference type="ChEBI" id="CHEBI:57540"/>
    </ligand>
</feature>
<feature type="binding site" evidence="1">
    <location>
        <position position="211"/>
    </location>
    <ligand>
        <name>NAD(+)</name>
        <dbReference type="ChEBI" id="CHEBI:57540"/>
    </ligand>
</feature>
<feature type="binding site" evidence="1">
    <location>
        <position position="245"/>
    </location>
    <ligand>
        <name>NAD(+)</name>
        <dbReference type="ChEBI" id="CHEBI:57540"/>
    </ligand>
</feature>
<feature type="binding site" evidence="1">
    <location>
        <begin position="276"/>
        <end position="279"/>
    </location>
    <ligand>
        <name>NAD(+)</name>
        <dbReference type="ChEBI" id="CHEBI:57540"/>
    </ligand>
</feature>
<feature type="binding site" evidence="1">
    <location>
        <position position="319"/>
    </location>
    <ligand>
        <name>FAD</name>
        <dbReference type="ChEBI" id="CHEBI:57692"/>
    </ligand>
</feature>
<feature type="binding site" evidence="1">
    <location>
        <position position="327"/>
    </location>
    <ligand>
        <name>FAD</name>
        <dbReference type="ChEBI" id="CHEBI:57692"/>
    </ligand>
</feature>
<feature type="disulfide bond" description="Redox-active" evidence="1">
    <location>
        <begin position="49"/>
        <end position="54"/>
    </location>
</feature>
<feature type="strand" evidence="3">
    <location>
        <begin position="4"/>
        <end position="10"/>
    </location>
</feature>
<feature type="helix" evidence="3">
    <location>
        <begin position="14"/>
        <end position="25"/>
    </location>
</feature>
<feature type="strand" evidence="3">
    <location>
        <begin position="30"/>
        <end position="34"/>
    </location>
</feature>
<feature type="strand" evidence="3">
    <location>
        <begin position="41"/>
        <end position="43"/>
    </location>
</feature>
<feature type="helix" evidence="3">
    <location>
        <begin position="47"/>
        <end position="52"/>
    </location>
</feature>
<feature type="helix" evidence="3">
    <location>
        <begin position="54"/>
        <end position="72"/>
    </location>
</feature>
<feature type="helix" evidence="3">
    <location>
        <begin position="75"/>
        <end position="77"/>
    </location>
</feature>
<feature type="strand" evidence="3">
    <location>
        <begin position="82"/>
        <end position="86"/>
    </location>
</feature>
<feature type="helix" evidence="3">
    <location>
        <begin position="88"/>
        <end position="113"/>
    </location>
</feature>
<feature type="strand" evidence="3">
    <location>
        <begin position="116"/>
        <end position="124"/>
    </location>
</feature>
<feature type="helix" evidence="3">
    <location>
        <begin position="126"/>
        <end position="128"/>
    </location>
</feature>
<feature type="strand" evidence="3">
    <location>
        <begin position="129"/>
        <end position="133"/>
    </location>
</feature>
<feature type="strand" evidence="3">
    <location>
        <begin position="139"/>
        <end position="149"/>
    </location>
</feature>
<feature type="strand" evidence="3">
    <location>
        <begin position="153"/>
        <end position="155"/>
    </location>
</feature>
<feature type="turn" evidence="3">
    <location>
        <begin position="165"/>
        <end position="167"/>
    </location>
</feature>
<feature type="helix" evidence="3">
    <location>
        <begin position="171"/>
        <end position="174"/>
    </location>
</feature>
<feature type="strand" evidence="3">
    <location>
        <begin position="182"/>
        <end position="187"/>
    </location>
</feature>
<feature type="helix" evidence="3">
    <location>
        <begin position="191"/>
        <end position="202"/>
    </location>
</feature>
<feature type="strand" evidence="3">
    <location>
        <begin position="206"/>
        <end position="210"/>
    </location>
</feature>
<feature type="strand" evidence="3">
    <location>
        <begin position="212"/>
        <end position="217"/>
    </location>
</feature>
<feature type="helix" evidence="3">
    <location>
        <begin position="222"/>
        <end position="234"/>
    </location>
</feature>
<feature type="strand" evidence="3">
    <location>
        <begin position="237"/>
        <end position="240"/>
    </location>
</feature>
<feature type="strand" evidence="3">
    <location>
        <begin position="244"/>
        <end position="251"/>
    </location>
</feature>
<feature type="strand" evidence="3">
    <location>
        <begin position="254"/>
        <end position="261"/>
    </location>
</feature>
<feature type="strand" evidence="3">
    <location>
        <begin position="264"/>
        <end position="275"/>
    </location>
</feature>
<feature type="strand" evidence="3">
    <location>
        <begin position="279"/>
        <end position="281"/>
    </location>
</feature>
<feature type="turn" evidence="3">
    <location>
        <begin position="284"/>
        <end position="286"/>
    </location>
</feature>
<feature type="strand" evidence="3">
    <location>
        <begin position="314"/>
        <end position="316"/>
    </location>
</feature>
<feature type="helix" evidence="3">
    <location>
        <begin position="318"/>
        <end position="320"/>
    </location>
</feature>
<feature type="strand" evidence="3">
    <location>
        <begin position="321"/>
        <end position="323"/>
    </location>
</feature>
<feature type="helix" evidence="3">
    <location>
        <begin position="327"/>
        <end position="341"/>
    </location>
</feature>
<feature type="strand" evidence="3">
    <location>
        <begin position="355"/>
        <end position="357"/>
    </location>
</feature>
<feature type="strand" evidence="3">
    <location>
        <begin position="359"/>
        <end position="361"/>
    </location>
</feature>
<feature type="strand" evidence="3">
    <location>
        <begin position="363"/>
        <end position="367"/>
    </location>
</feature>
<feature type="helix" evidence="3">
    <location>
        <begin position="370"/>
        <end position="375"/>
    </location>
</feature>
<feature type="strand" evidence="3">
    <location>
        <begin position="380"/>
        <end position="386"/>
    </location>
</feature>
<feature type="helix" evidence="3">
    <location>
        <begin position="387"/>
        <end position="389"/>
    </location>
</feature>
<feature type="helix" evidence="3">
    <location>
        <begin position="391"/>
        <end position="395"/>
    </location>
</feature>
<feature type="strand" evidence="3">
    <location>
        <begin position="402"/>
        <end position="408"/>
    </location>
</feature>
<feature type="turn" evidence="3">
    <location>
        <begin position="409"/>
        <end position="411"/>
    </location>
</feature>
<feature type="strand" evidence="3">
    <location>
        <begin position="413"/>
        <end position="421"/>
    </location>
</feature>
<feature type="helix" evidence="3">
    <location>
        <begin position="424"/>
        <end position="436"/>
    </location>
</feature>
<feature type="helix" evidence="3">
    <location>
        <begin position="441"/>
        <end position="445"/>
    </location>
</feature>
<feature type="helix" evidence="3">
    <location>
        <begin position="456"/>
        <end position="465"/>
    </location>
</feature>
<feature type="strand" evidence="3">
    <location>
        <begin position="470"/>
        <end position="472"/>
    </location>
</feature>
<accession>Q9I3D1</accession>
<protein>
    <recommendedName>
        <fullName>Dihydrolipoyl dehydrogenase</fullName>
        <ecNumber>1.8.1.4</ecNumber>
    </recommendedName>
    <alternativeName>
        <fullName>Dihydrolipoamide dehydrogenase</fullName>
    </alternativeName>
    <alternativeName>
        <fullName>E3 component of 2-oxoglutarate dehydrogenase complex</fullName>
    </alternativeName>
    <alternativeName>
        <fullName>Glycine oxidation system L-factor</fullName>
    </alternativeName>
    <alternativeName>
        <fullName>LPD-GLC</fullName>
    </alternativeName>
</protein>
<comment type="function">
    <text evidence="1">The branched-chain alpha-keto dehydrogenase complex catalyzes the overall conversion of alpha-keto acids to acyl-CoA and CO(2). It contains multiple copies of 3 enzymatic components: branched-chain alpha-keto acid decarboxylase (E1), lipoamide acyltransferase (E2) and lipoamide dehydrogenase (E3) (By similarity).</text>
</comment>
<comment type="function">
    <text evidence="1">Also acts in the glycine cleavage system.</text>
</comment>
<comment type="catalytic activity">
    <reaction>
        <text>N(6)-[(R)-dihydrolipoyl]-L-lysyl-[protein] + NAD(+) = N(6)-[(R)-lipoyl]-L-lysyl-[protein] + NADH + H(+)</text>
        <dbReference type="Rhea" id="RHEA:15045"/>
        <dbReference type="Rhea" id="RHEA-COMP:10474"/>
        <dbReference type="Rhea" id="RHEA-COMP:10475"/>
        <dbReference type="ChEBI" id="CHEBI:15378"/>
        <dbReference type="ChEBI" id="CHEBI:57540"/>
        <dbReference type="ChEBI" id="CHEBI:57945"/>
        <dbReference type="ChEBI" id="CHEBI:83099"/>
        <dbReference type="ChEBI" id="CHEBI:83100"/>
        <dbReference type="EC" id="1.8.1.4"/>
    </reaction>
</comment>
<comment type="cofactor">
    <cofactor evidence="1">
        <name>FAD</name>
        <dbReference type="ChEBI" id="CHEBI:57692"/>
    </cofactor>
    <text evidence="1">Binds 1 FAD per subunit.</text>
</comment>
<comment type="subunit">
    <text evidence="1">Homodimer.</text>
</comment>
<comment type="subcellular location">
    <subcellularLocation>
        <location evidence="1">Cytoplasm</location>
    </subcellularLocation>
</comment>
<comment type="miscellaneous">
    <text evidence="1">The active site is a redox-active disulfide bond.</text>
</comment>
<comment type="similarity">
    <text evidence="2">Belongs to the class-I pyridine nucleotide-disulfide oxidoreductase family.</text>
</comment>
<evidence type="ECO:0000250" key="1"/>
<evidence type="ECO:0000305" key="2"/>
<evidence type="ECO:0007829" key="3">
    <source>
        <dbReference type="PDB" id="5U8U"/>
    </source>
</evidence>
<sequence length="478" mass="50165">MSQKFDVVVIGAGPGGYVAAIRAAQLGLKTACIEKYIGKEGKVALGGTCLNVGCIPSKALLDSSYKYHEAKEAFKVHGIEAKGVTIDVPAMVARKANIVKNLTGGIATLFKANGVTSFEGHGKLLANKQVEVTGLDGKTQVLEAENVIIASGSRPVEIPPAPLTDDIIVDSTGALEFQAVPKKLGVIGAGVIGLELGSVWARLGAEVTVLEALDKFLPAADEQIAKEALKVLTKQGLNIRLGARVTASEVKKKQVTVTFTDANGEQKETFDKLIVAVGRRPVTTDLLAADSGVTLDERGFIYVDDHCKTSVPGVFAIGDVVRGAMLAHKASEEGVMVAERIAGHKAQMNYDLIPSVIYTHPEIAWVGKTEQTLKAEGVEVNVGTFPFAASGRAMAANDTTGLVKVIADAKTDRVLGVHVIGPSAAELVQQGAIGMEFGTSAEDLGMMVFSHPTLSEALHEAALAVNGHAIHIANRKKR</sequence>
<dbReference type="EC" id="1.8.1.4"/>
<dbReference type="EMBL" id="AE004091">
    <property type="protein sequence ID" value="AAG04976.1"/>
    <property type="molecule type" value="Genomic_DNA"/>
</dbReference>
<dbReference type="PIR" id="A83449">
    <property type="entry name" value="A83449"/>
</dbReference>
<dbReference type="RefSeq" id="NP_250278.1">
    <property type="nucleotide sequence ID" value="NC_002516.2"/>
</dbReference>
<dbReference type="PDB" id="5U8U">
    <property type="method" value="X-ray"/>
    <property type="resolution" value="1.35 A"/>
    <property type="chains" value="A/B/C/D=1-478"/>
</dbReference>
<dbReference type="PDBsum" id="5U8U"/>
<dbReference type="SMR" id="Q9I3D1"/>
<dbReference type="FunCoup" id="Q9I3D1">
    <property type="interactions" value="836"/>
</dbReference>
<dbReference type="STRING" id="208964.PA1587"/>
<dbReference type="PaxDb" id="208964-PA1587"/>
<dbReference type="GeneID" id="882090"/>
<dbReference type="KEGG" id="pae:PA1587"/>
<dbReference type="PATRIC" id="fig|208964.12.peg.1646"/>
<dbReference type="PseudoCAP" id="PA1587"/>
<dbReference type="HOGENOM" id="CLU_016755_0_1_6"/>
<dbReference type="InParanoid" id="Q9I3D1"/>
<dbReference type="OrthoDB" id="9800167at2"/>
<dbReference type="PhylomeDB" id="Q9I3D1"/>
<dbReference type="BioCyc" id="PAER208964:G1FZ6-1617-MONOMER"/>
<dbReference type="BRENDA" id="1.8.1.4">
    <property type="organism ID" value="5087"/>
</dbReference>
<dbReference type="Proteomes" id="UP000002438">
    <property type="component" value="Chromosome"/>
</dbReference>
<dbReference type="GO" id="GO:0005737">
    <property type="term" value="C:cytoplasm"/>
    <property type="evidence" value="ECO:0007669"/>
    <property type="project" value="UniProtKB-SubCell"/>
</dbReference>
<dbReference type="GO" id="GO:0004148">
    <property type="term" value="F:dihydrolipoyl dehydrogenase (NADH) activity"/>
    <property type="evidence" value="ECO:0000318"/>
    <property type="project" value="GO_Central"/>
</dbReference>
<dbReference type="GO" id="GO:0050660">
    <property type="term" value="F:flavin adenine dinucleotide binding"/>
    <property type="evidence" value="ECO:0000318"/>
    <property type="project" value="GO_Central"/>
</dbReference>
<dbReference type="GO" id="GO:0006103">
    <property type="term" value="P:2-oxoglutarate metabolic process"/>
    <property type="evidence" value="ECO:0000318"/>
    <property type="project" value="GO_Central"/>
</dbReference>
<dbReference type="GO" id="GO:0006090">
    <property type="term" value="P:pyruvate metabolic process"/>
    <property type="evidence" value="ECO:0000318"/>
    <property type="project" value="GO_Central"/>
</dbReference>
<dbReference type="GO" id="GO:0141115">
    <property type="term" value="P:symbiont-mediated suppression of host complement activation by inactivation of complement proteins"/>
    <property type="evidence" value="ECO:0000269"/>
    <property type="project" value="SigSci"/>
</dbReference>
<dbReference type="GO" id="GO:0141117">
    <property type="term" value="P:symbiont-mediated suppression of host complement activation by recruitment of complement control protein"/>
    <property type="evidence" value="ECO:0000269"/>
    <property type="project" value="SigSci"/>
</dbReference>
<dbReference type="FunFam" id="3.30.390.30:FF:000001">
    <property type="entry name" value="Dihydrolipoyl dehydrogenase"/>
    <property type="match status" value="1"/>
</dbReference>
<dbReference type="FunFam" id="3.50.50.60:FF:000272">
    <property type="entry name" value="Dihydrolipoyl dehydrogenase"/>
    <property type="match status" value="1"/>
</dbReference>
<dbReference type="Gene3D" id="3.30.390.30">
    <property type="match status" value="1"/>
</dbReference>
<dbReference type="Gene3D" id="3.50.50.60">
    <property type="entry name" value="FAD/NAD(P)-binding domain"/>
    <property type="match status" value="2"/>
</dbReference>
<dbReference type="InterPro" id="IPR050151">
    <property type="entry name" value="Class-I_Pyr_Nuc-Dis_Oxidored"/>
</dbReference>
<dbReference type="InterPro" id="IPR036188">
    <property type="entry name" value="FAD/NAD-bd_sf"/>
</dbReference>
<dbReference type="InterPro" id="IPR023753">
    <property type="entry name" value="FAD/NAD-binding_dom"/>
</dbReference>
<dbReference type="InterPro" id="IPR016156">
    <property type="entry name" value="FAD/NAD-linked_Rdtase_dimer_sf"/>
</dbReference>
<dbReference type="InterPro" id="IPR006258">
    <property type="entry name" value="Lipoamide_DH"/>
</dbReference>
<dbReference type="InterPro" id="IPR001100">
    <property type="entry name" value="Pyr_nuc-diS_OxRdtase"/>
</dbReference>
<dbReference type="InterPro" id="IPR004099">
    <property type="entry name" value="Pyr_nucl-diS_OxRdtase_dimer"/>
</dbReference>
<dbReference type="InterPro" id="IPR012999">
    <property type="entry name" value="Pyr_OxRdtase_I_AS"/>
</dbReference>
<dbReference type="NCBIfam" id="TIGR01350">
    <property type="entry name" value="lipoamide_DH"/>
    <property type="match status" value="1"/>
</dbReference>
<dbReference type="PANTHER" id="PTHR22912:SF224">
    <property type="entry name" value="DIHYDROLIPOYL DEHYDROGENASE"/>
    <property type="match status" value="1"/>
</dbReference>
<dbReference type="PANTHER" id="PTHR22912">
    <property type="entry name" value="DISULFIDE OXIDOREDUCTASE"/>
    <property type="match status" value="1"/>
</dbReference>
<dbReference type="Pfam" id="PF07992">
    <property type="entry name" value="Pyr_redox_2"/>
    <property type="match status" value="1"/>
</dbReference>
<dbReference type="Pfam" id="PF02852">
    <property type="entry name" value="Pyr_redox_dim"/>
    <property type="match status" value="1"/>
</dbReference>
<dbReference type="PIRSF" id="PIRSF000350">
    <property type="entry name" value="Mercury_reductase_MerA"/>
    <property type="match status" value="1"/>
</dbReference>
<dbReference type="PRINTS" id="PR00368">
    <property type="entry name" value="FADPNR"/>
</dbReference>
<dbReference type="PRINTS" id="PR00411">
    <property type="entry name" value="PNDRDTASEI"/>
</dbReference>
<dbReference type="SUPFAM" id="SSF51905">
    <property type="entry name" value="FAD/NAD(P)-binding domain"/>
    <property type="match status" value="1"/>
</dbReference>
<dbReference type="SUPFAM" id="SSF55424">
    <property type="entry name" value="FAD/NAD-linked reductases, dimerisation (C-terminal) domain"/>
    <property type="match status" value="1"/>
</dbReference>
<dbReference type="PROSITE" id="PS00076">
    <property type="entry name" value="PYRIDINE_REDOX_1"/>
    <property type="match status" value="1"/>
</dbReference>
<gene>
    <name type="primary">lpdG</name>
    <name type="ordered locus">PA1587</name>
</gene>